<evidence type="ECO:0000255" key="1">
    <source>
        <dbReference type="HAMAP-Rule" id="MF_00532"/>
    </source>
</evidence>
<evidence type="ECO:0000305" key="2"/>
<feature type="chain" id="PRO_1000051345" description="Small ribosomal subunit protein uS9">
    <location>
        <begin position="1"/>
        <end position="130"/>
    </location>
</feature>
<reference key="1">
    <citation type="journal article" date="2005" name="J. Infect. Dis.">
        <title>Genome sequence of a serotype M28 strain of group A Streptococcus: potential new insights into puerperal sepsis and bacterial disease specificity.</title>
        <authorList>
            <person name="Green N.M."/>
            <person name="Zhang S."/>
            <person name="Porcella S.F."/>
            <person name="Nagiec M.J."/>
            <person name="Barbian K.D."/>
            <person name="Beres S.B."/>
            <person name="Lefebvre R.B."/>
            <person name="Musser J.M."/>
        </authorList>
    </citation>
    <scope>NUCLEOTIDE SEQUENCE [LARGE SCALE GENOMIC DNA]</scope>
    <source>
        <strain>MGAS6180</strain>
    </source>
</reference>
<proteinExistence type="inferred from homology"/>
<keyword id="KW-0687">Ribonucleoprotein</keyword>
<keyword id="KW-0689">Ribosomal protein</keyword>
<gene>
    <name evidence="1" type="primary">rpsI</name>
    <name type="ordered locus">M28_Spy1634</name>
</gene>
<sequence>MAQAQYAGTGRRKNAVARVRLVPGTGKITVNKKDVEEYIPHADLRLIINQPFAVTSTEGSYDVFVNVVGGGYGGQSGAIRHGIARALLQVDPDFRDSLKRAGLLTRDARMVERKKPGLKKARKASQFSKR</sequence>
<accession>Q48RB6</accession>
<name>RS9_STRPM</name>
<comment type="similarity">
    <text evidence="1">Belongs to the universal ribosomal protein uS9 family.</text>
</comment>
<protein>
    <recommendedName>
        <fullName evidence="1">Small ribosomal subunit protein uS9</fullName>
    </recommendedName>
    <alternativeName>
        <fullName evidence="2">30S ribosomal protein S9</fullName>
    </alternativeName>
</protein>
<organism>
    <name type="scientific">Streptococcus pyogenes serotype M28 (strain MGAS6180)</name>
    <dbReference type="NCBI Taxonomy" id="319701"/>
    <lineage>
        <taxon>Bacteria</taxon>
        <taxon>Bacillati</taxon>
        <taxon>Bacillota</taxon>
        <taxon>Bacilli</taxon>
        <taxon>Lactobacillales</taxon>
        <taxon>Streptococcaceae</taxon>
        <taxon>Streptococcus</taxon>
    </lineage>
</organism>
<dbReference type="EMBL" id="CP000056">
    <property type="protein sequence ID" value="AAX72744.1"/>
    <property type="molecule type" value="Genomic_DNA"/>
</dbReference>
<dbReference type="RefSeq" id="WP_002982716.1">
    <property type="nucleotide sequence ID" value="NC_007296.2"/>
</dbReference>
<dbReference type="SMR" id="Q48RB6"/>
<dbReference type="GeneID" id="83689365"/>
<dbReference type="KEGG" id="spb:M28_Spy1634"/>
<dbReference type="HOGENOM" id="CLU_046483_2_1_9"/>
<dbReference type="GO" id="GO:0022627">
    <property type="term" value="C:cytosolic small ribosomal subunit"/>
    <property type="evidence" value="ECO:0007669"/>
    <property type="project" value="TreeGrafter"/>
</dbReference>
<dbReference type="GO" id="GO:0003723">
    <property type="term" value="F:RNA binding"/>
    <property type="evidence" value="ECO:0007669"/>
    <property type="project" value="TreeGrafter"/>
</dbReference>
<dbReference type="GO" id="GO:0003735">
    <property type="term" value="F:structural constituent of ribosome"/>
    <property type="evidence" value="ECO:0007669"/>
    <property type="project" value="InterPro"/>
</dbReference>
<dbReference type="GO" id="GO:0006412">
    <property type="term" value="P:translation"/>
    <property type="evidence" value="ECO:0007669"/>
    <property type="project" value="UniProtKB-UniRule"/>
</dbReference>
<dbReference type="FunFam" id="3.30.230.10:FF:000001">
    <property type="entry name" value="30S ribosomal protein S9"/>
    <property type="match status" value="1"/>
</dbReference>
<dbReference type="Gene3D" id="3.30.230.10">
    <property type="match status" value="1"/>
</dbReference>
<dbReference type="HAMAP" id="MF_00532_B">
    <property type="entry name" value="Ribosomal_uS9_B"/>
    <property type="match status" value="1"/>
</dbReference>
<dbReference type="InterPro" id="IPR020568">
    <property type="entry name" value="Ribosomal_Su5_D2-typ_SF"/>
</dbReference>
<dbReference type="InterPro" id="IPR000754">
    <property type="entry name" value="Ribosomal_uS9"/>
</dbReference>
<dbReference type="InterPro" id="IPR023035">
    <property type="entry name" value="Ribosomal_uS9_bac/plastid"/>
</dbReference>
<dbReference type="InterPro" id="IPR020574">
    <property type="entry name" value="Ribosomal_uS9_CS"/>
</dbReference>
<dbReference type="InterPro" id="IPR014721">
    <property type="entry name" value="Ribsml_uS5_D2-typ_fold_subgr"/>
</dbReference>
<dbReference type="NCBIfam" id="NF001099">
    <property type="entry name" value="PRK00132.1"/>
    <property type="match status" value="1"/>
</dbReference>
<dbReference type="PANTHER" id="PTHR21569">
    <property type="entry name" value="RIBOSOMAL PROTEIN S9"/>
    <property type="match status" value="1"/>
</dbReference>
<dbReference type="PANTHER" id="PTHR21569:SF1">
    <property type="entry name" value="SMALL RIBOSOMAL SUBUNIT PROTEIN US9M"/>
    <property type="match status" value="1"/>
</dbReference>
<dbReference type="Pfam" id="PF00380">
    <property type="entry name" value="Ribosomal_S9"/>
    <property type="match status" value="1"/>
</dbReference>
<dbReference type="SUPFAM" id="SSF54211">
    <property type="entry name" value="Ribosomal protein S5 domain 2-like"/>
    <property type="match status" value="1"/>
</dbReference>
<dbReference type="PROSITE" id="PS00360">
    <property type="entry name" value="RIBOSOMAL_S9"/>
    <property type="match status" value="1"/>
</dbReference>